<organism>
    <name type="scientific">Shewanella piezotolerans (strain WP3 / JCM 13877)</name>
    <dbReference type="NCBI Taxonomy" id="225849"/>
    <lineage>
        <taxon>Bacteria</taxon>
        <taxon>Pseudomonadati</taxon>
        <taxon>Pseudomonadota</taxon>
        <taxon>Gammaproteobacteria</taxon>
        <taxon>Alteromonadales</taxon>
        <taxon>Shewanellaceae</taxon>
        <taxon>Shewanella</taxon>
    </lineage>
</organism>
<dbReference type="EC" id="1.14.-.-" evidence="1"/>
<dbReference type="EMBL" id="CP000472">
    <property type="protein sequence ID" value="ACJ28645.1"/>
    <property type="molecule type" value="Genomic_DNA"/>
</dbReference>
<dbReference type="RefSeq" id="WP_020912021.1">
    <property type="nucleotide sequence ID" value="NC_011566.1"/>
</dbReference>
<dbReference type="SMR" id="B8CLJ4"/>
<dbReference type="STRING" id="225849.swp_1885"/>
<dbReference type="KEGG" id="swp:swp_1885"/>
<dbReference type="eggNOG" id="COG1054">
    <property type="taxonomic scope" value="Bacteria"/>
</dbReference>
<dbReference type="HOGENOM" id="CLU_038878_0_0_6"/>
<dbReference type="OrthoDB" id="9778326at2"/>
<dbReference type="Proteomes" id="UP000000753">
    <property type="component" value="Chromosome"/>
</dbReference>
<dbReference type="GO" id="GO:0016705">
    <property type="term" value="F:oxidoreductase activity, acting on paired donors, with incorporation or reduction of molecular oxygen"/>
    <property type="evidence" value="ECO:0007669"/>
    <property type="project" value="UniProtKB-UniRule"/>
</dbReference>
<dbReference type="GO" id="GO:0006400">
    <property type="term" value="P:tRNA modification"/>
    <property type="evidence" value="ECO:0007669"/>
    <property type="project" value="UniProtKB-UniRule"/>
</dbReference>
<dbReference type="CDD" id="cd01518">
    <property type="entry name" value="RHOD_YceA"/>
    <property type="match status" value="1"/>
</dbReference>
<dbReference type="Gene3D" id="3.30.70.100">
    <property type="match status" value="1"/>
</dbReference>
<dbReference type="Gene3D" id="3.40.250.10">
    <property type="entry name" value="Rhodanese-like domain"/>
    <property type="match status" value="1"/>
</dbReference>
<dbReference type="HAMAP" id="MF_00469">
    <property type="entry name" value="TrhO"/>
    <property type="match status" value="1"/>
</dbReference>
<dbReference type="InterPro" id="IPR001763">
    <property type="entry name" value="Rhodanese-like_dom"/>
</dbReference>
<dbReference type="InterPro" id="IPR036873">
    <property type="entry name" value="Rhodanese-like_dom_sf"/>
</dbReference>
<dbReference type="InterPro" id="IPR020936">
    <property type="entry name" value="TrhO"/>
</dbReference>
<dbReference type="InterPro" id="IPR040503">
    <property type="entry name" value="TRHO_N"/>
</dbReference>
<dbReference type="NCBIfam" id="NF001136">
    <property type="entry name" value="PRK00142.1-4"/>
    <property type="match status" value="1"/>
</dbReference>
<dbReference type="PANTHER" id="PTHR43268:SF3">
    <property type="entry name" value="RHODANESE-LIKE DOMAIN-CONTAINING PROTEIN 7-RELATED"/>
    <property type="match status" value="1"/>
</dbReference>
<dbReference type="PANTHER" id="PTHR43268">
    <property type="entry name" value="THIOSULFATE SULFURTRANSFERASE/RHODANESE-LIKE DOMAIN-CONTAINING PROTEIN 2"/>
    <property type="match status" value="1"/>
</dbReference>
<dbReference type="Pfam" id="PF00581">
    <property type="entry name" value="Rhodanese"/>
    <property type="match status" value="1"/>
</dbReference>
<dbReference type="Pfam" id="PF17773">
    <property type="entry name" value="UPF0176_N"/>
    <property type="match status" value="1"/>
</dbReference>
<dbReference type="SMART" id="SM00450">
    <property type="entry name" value="RHOD"/>
    <property type="match status" value="1"/>
</dbReference>
<dbReference type="SUPFAM" id="SSF52821">
    <property type="entry name" value="Rhodanese/Cell cycle control phosphatase"/>
    <property type="match status" value="1"/>
</dbReference>
<dbReference type="PROSITE" id="PS50206">
    <property type="entry name" value="RHODANESE_3"/>
    <property type="match status" value="1"/>
</dbReference>
<evidence type="ECO:0000255" key="1">
    <source>
        <dbReference type="HAMAP-Rule" id="MF_00469"/>
    </source>
</evidence>
<accession>B8CLJ4</accession>
<reference key="1">
    <citation type="journal article" date="2008" name="PLoS ONE">
        <title>Environmental adaptation: genomic analysis of the piezotolerant and psychrotolerant deep-sea iron reducing bacterium Shewanella piezotolerans WP3.</title>
        <authorList>
            <person name="Wang F."/>
            <person name="Wang J."/>
            <person name="Jian H."/>
            <person name="Zhang B."/>
            <person name="Li S."/>
            <person name="Wang F."/>
            <person name="Zeng X."/>
            <person name="Gao L."/>
            <person name="Bartlett D.H."/>
            <person name="Yu J."/>
            <person name="Hu S."/>
            <person name="Xiao X."/>
        </authorList>
    </citation>
    <scope>NUCLEOTIDE SEQUENCE [LARGE SCALE GENOMIC DNA]</scope>
    <source>
        <strain>WP3 / JCM 13877</strain>
    </source>
</reference>
<protein>
    <recommendedName>
        <fullName evidence="1">tRNA uridine(34) hydroxylase</fullName>
        <ecNumber evidence="1">1.14.-.-</ecNumber>
    </recommendedName>
    <alternativeName>
        <fullName evidence="1">tRNA hydroxylation protein O</fullName>
    </alternativeName>
</protein>
<keyword id="KW-0560">Oxidoreductase</keyword>
<keyword id="KW-0819">tRNA processing</keyword>
<comment type="function">
    <text evidence="1">Catalyzes oxygen-dependent 5-hydroxyuridine (ho5U) modification at position 34 in tRNAs.</text>
</comment>
<comment type="catalytic activity">
    <reaction evidence="1">
        <text>uridine(34) in tRNA + AH2 + O2 = 5-hydroxyuridine(34) in tRNA + A + H2O</text>
        <dbReference type="Rhea" id="RHEA:64224"/>
        <dbReference type="Rhea" id="RHEA-COMP:11727"/>
        <dbReference type="Rhea" id="RHEA-COMP:13381"/>
        <dbReference type="ChEBI" id="CHEBI:13193"/>
        <dbReference type="ChEBI" id="CHEBI:15377"/>
        <dbReference type="ChEBI" id="CHEBI:15379"/>
        <dbReference type="ChEBI" id="CHEBI:17499"/>
        <dbReference type="ChEBI" id="CHEBI:65315"/>
        <dbReference type="ChEBI" id="CHEBI:136877"/>
    </reaction>
</comment>
<comment type="similarity">
    <text evidence="1">Belongs to the TrhO family.</text>
</comment>
<feature type="chain" id="PRO_1000200379" description="tRNA uridine(34) hydroxylase">
    <location>
        <begin position="1"/>
        <end position="327"/>
    </location>
</feature>
<feature type="domain" description="Rhodanese" evidence="1">
    <location>
        <begin position="123"/>
        <end position="217"/>
    </location>
</feature>
<feature type="active site" description="Cysteine persulfide intermediate" evidence="1">
    <location>
        <position position="177"/>
    </location>
</feature>
<name>TRHO_SHEPW</name>
<gene>
    <name evidence="1" type="primary">trhO</name>
    <name type="ordered locus">swp_1885</name>
</gene>
<sequence length="327" mass="37065">MSKVVVCAMYKFVSLPDFERIQKPLLIVMEKSGIKGTLLLAKEGINGTVAGSQSAIDALLAWLATQPGLDNIVHKLSFDDDMPFYRTKVKLKKEIVTMGVEGIDPNEVVGTYVKPKDWNALISDPEVLLVDTRNDYEVKIGTFENALDPQTATFREFPEYVKQNLDPTKHKKVAMFCTGGIRCEKSTAYLKEQGFEDVYHLEGGILKYLEEVKQEESMWQGECFVFDNRVAVNHDLEKGQYDQCNACRMPITEAEKASSQFEQGVSCPHCIDKVTDKQRERFLERERQVQLSKQRGEAHIGSDVSAVIESRRAKKEQLKKSQNEKSV</sequence>
<proteinExistence type="inferred from homology"/>